<accession>Q6G951</accession>
<evidence type="ECO:0000305" key="1"/>
<reference key="1">
    <citation type="journal article" date="2004" name="Proc. Natl. Acad. Sci. U.S.A.">
        <title>Complete genomes of two clinical Staphylococcus aureus strains: evidence for the rapid evolution of virulence and drug resistance.</title>
        <authorList>
            <person name="Holden M.T.G."/>
            <person name="Feil E.J."/>
            <person name="Lindsay J.A."/>
            <person name="Peacock S.J."/>
            <person name="Day N.P.J."/>
            <person name="Enright M.C."/>
            <person name="Foster T.J."/>
            <person name="Moore C.E."/>
            <person name="Hurst L."/>
            <person name="Atkin R."/>
            <person name="Barron A."/>
            <person name="Bason N."/>
            <person name="Bentley S.D."/>
            <person name="Chillingworth C."/>
            <person name="Chillingworth T."/>
            <person name="Churcher C."/>
            <person name="Clark L."/>
            <person name="Corton C."/>
            <person name="Cronin A."/>
            <person name="Doggett J."/>
            <person name="Dowd L."/>
            <person name="Feltwell T."/>
            <person name="Hance Z."/>
            <person name="Harris B."/>
            <person name="Hauser H."/>
            <person name="Holroyd S."/>
            <person name="Jagels K."/>
            <person name="James K.D."/>
            <person name="Lennard N."/>
            <person name="Line A."/>
            <person name="Mayes R."/>
            <person name="Moule S."/>
            <person name="Mungall K."/>
            <person name="Ormond D."/>
            <person name="Quail M.A."/>
            <person name="Rabbinowitsch E."/>
            <person name="Rutherford K.M."/>
            <person name="Sanders M."/>
            <person name="Sharp S."/>
            <person name="Simmonds M."/>
            <person name="Stevens K."/>
            <person name="Whitehead S."/>
            <person name="Barrell B.G."/>
            <person name="Spratt B.G."/>
            <person name="Parkhill J."/>
        </authorList>
    </citation>
    <scope>NUCLEOTIDE SEQUENCE [LARGE SCALE GENOMIC DNA]</scope>
    <source>
        <strain>MSSA476</strain>
    </source>
</reference>
<feature type="chain" id="PRO_0000272002" description="Bacilliredoxin SAS1453">
    <location>
        <begin position="1"/>
        <end position="145"/>
    </location>
</feature>
<sequence>MDMNFDLYMNGVVEQARNEIESAGYEQLTTAEDVDKVLKQDGTTLVMINSVCGCAGGIARPAASHALHYDVLPDRLVTVFAGQDKEATQRAREYFEGYAPSSPSFALVKDGKITEMIERHQIEGHDVMNVINQLQTLFNKYCEER</sequence>
<gene>
    <name type="ordered locus">SAS1453</name>
</gene>
<name>Y1453_STAAS</name>
<organism>
    <name type="scientific">Staphylococcus aureus (strain MSSA476)</name>
    <dbReference type="NCBI Taxonomy" id="282459"/>
    <lineage>
        <taxon>Bacteria</taxon>
        <taxon>Bacillati</taxon>
        <taxon>Bacillota</taxon>
        <taxon>Bacilli</taxon>
        <taxon>Bacillales</taxon>
        <taxon>Staphylococcaceae</taxon>
        <taxon>Staphylococcus</taxon>
    </lineage>
</organism>
<comment type="similarity">
    <text evidence="1">Belongs to the bacilliredoxin family.</text>
</comment>
<protein>
    <recommendedName>
        <fullName evidence="1">Bacilliredoxin SAS1453</fullName>
    </recommendedName>
</protein>
<proteinExistence type="inferred from homology"/>
<dbReference type="EMBL" id="BX571857">
    <property type="protein sequence ID" value="CAG43235.1"/>
    <property type="molecule type" value="Genomic_DNA"/>
</dbReference>
<dbReference type="SMR" id="Q6G951"/>
<dbReference type="KEGG" id="sas:SAS1453"/>
<dbReference type="HOGENOM" id="CLU_132521_0_0_9"/>
<dbReference type="GO" id="GO:0045454">
    <property type="term" value="P:cell redox homeostasis"/>
    <property type="evidence" value="ECO:0000250"/>
    <property type="project" value="UniProtKB"/>
</dbReference>
<dbReference type="Gene3D" id="3.40.30.10">
    <property type="entry name" value="Glutaredoxin"/>
    <property type="match status" value="1"/>
</dbReference>
<dbReference type="InterPro" id="IPR009474">
    <property type="entry name" value="BrxB/BrxA"/>
</dbReference>
<dbReference type="NCBIfam" id="TIGR04191">
    <property type="entry name" value="YphP_YqiW"/>
    <property type="match status" value="1"/>
</dbReference>
<dbReference type="PANTHER" id="PTHR40052:SF1">
    <property type="entry name" value="BACILLIREDOXIN BRXB"/>
    <property type="match status" value="1"/>
</dbReference>
<dbReference type="PANTHER" id="PTHR40052">
    <property type="entry name" value="UPF0403 PROTEIN YQIW-RELATED"/>
    <property type="match status" value="1"/>
</dbReference>
<dbReference type="Pfam" id="PF06491">
    <property type="entry name" value="Disulph_isomer"/>
    <property type="match status" value="1"/>
</dbReference>